<proteinExistence type="inferred from homology"/>
<comment type="function">
    <text evidence="1">Component of the sulfite reductase complex that catalyzes the 6-electron reduction of sulfite to sulfide. This is one of several activities required for the biosynthesis of L-cysteine from sulfate.</text>
</comment>
<comment type="catalytic activity">
    <reaction evidence="1">
        <text>hydrogen sulfide + 3 NADP(+) + 3 H2O = sulfite + 3 NADPH + 4 H(+)</text>
        <dbReference type="Rhea" id="RHEA:13801"/>
        <dbReference type="ChEBI" id="CHEBI:15377"/>
        <dbReference type="ChEBI" id="CHEBI:15378"/>
        <dbReference type="ChEBI" id="CHEBI:17359"/>
        <dbReference type="ChEBI" id="CHEBI:29919"/>
        <dbReference type="ChEBI" id="CHEBI:57783"/>
        <dbReference type="ChEBI" id="CHEBI:58349"/>
        <dbReference type="EC" id="1.8.1.2"/>
    </reaction>
</comment>
<comment type="cofactor">
    <cofactor evidence="1">
        <name>siroheme</name>
        <dbReference type="ChEBI" id="CHEBI:60052"/>
    </cofactor>
    <text evidence="1">Binds 1 siroheme per subunit.</text>
</comment>
<comment type="cofactor">
    <cofactor evidence="1">
        <name>[4Fe-4S] cluster</name>
        <dbReference type="ChEBI" id="CHEBI:49883"/>
    </cofactor>
    <text evidence="1">Binds 1 [4Fe-4S] cluster per subunit.</text>
</comment>
<comment type="pathway">
    <text evidence="1">Sulfur metabolism; hydrogen sulfide biosynthesis; hydrogen sulfide from sulfite (NADPH route): step 1/1.</text>
</comment>
<comment type="subunit">
    <text evidence="1">Alpha(8)-beta(8). The alpha component is a flavoprotein, the beta component is a hemoprotein.</text>
</comment>
<comment type="similarity">
    <text evidence="1">Belongs to the nitrite and sulfite reductase 4Fe-4S domain family.</text>
</comment>
<name>CYSI_ECOL5</name>
<evidence type="ECO:0000255" key="1">
    <source>
        <dbReference type="HAMAP-Rule" id="MF_01540"/>
    </source>
</evidence>
<gene>
    <name evidence="1" type="primary">cysI</name>
    <name type="ordered locus">ECP_2737</name>
</gene>
<feature type="chain" id="PRO_1000068761" description="Sulfite reductase [NADPH] hemoprotein beta-component">
    <location>
        <begin position="1"/>
        <end position="570"/>
    </location>
</feature>
<feature type="binding site" evidence="1">
    <location>
        <position position="434"/>
    </location>
    <ligand>
        <name>[4Fe-4S] cluster</name>
        <dbReference type="ChEBI" id="CHEBI:49883"/>
    </ligand>
</feature>
<feature type="binding site" evidence="1">
    <location>
        <position position="440"/>
    </location>
    <ligand>
        <name>[4Fe-4S] cluster</name>
        <dbReference type="ChEBI" id="CHEBI:49883"/>
    </ligand>
</feature>
<feature type="binding site" evidence="1">
    <location>
        <position position="479"/>
    </location>
    <ligand>
        <name>[4Fe-4S] cluster</name>
        <dbReference type="ChEBI" id="CHEBI:49883"/>
    </ligand>
</feature>
<feature type="binding site" evidence="1">
    <location>
        <position position="483"/>
    </location>
    <ligand>
        <name>[4Fe-4S] cluster</name>
        <dbReference type="ChEBI" id="CHEBI:49883"/>
    </ligand>
</feature>
<feature type="binding site" description="axial binding residue" evidence="1">
    <location>
        <position position="483"/>
    </location>
    <ligand>
        <name>siroheme</name>
        <dbReference type="ChEBI" id="CHEBI:60052"/>
    </ligand>
    <ligandPart>
        <name>Fe</name>
        <dbReference type="ChEBI" id="CHEBI:18248"/>
    </ligandPart>
</feature>
<dbReference type="EC" id="1.8.1.2" evidence="1"/>
<dbReference type="EMBL" id="CP000247">
    <property type="protein sequence ID" value="ABG70726.1"/>
    <property type="molecule type" value="Genomic_DNA"/>
</dbReference>
<dbReference type="RefSeq" id="WP_001290708.1">
    <property type="nucleotide sequence ID" value="NC_008253.1"/>
</dbReference>
<dbReference type="SMR" id="Q0TEA3"/>
<dbReference type="KEGG" id="ecp:ECP_2737"/>
<dbReference type="HOGENOM" id="CLU_001975_3_2_6"/>
<dbReference type="UniPathway" id="UPA00140">
    <property type="reaction ID" value="UER00207"/>
</dbReference>
<dbReference type="Proteomes" id="UP000009182">
    <property type="component" value="Chromosome"/>
</dbReference>
<dbReference type="GO" id="GO:0009337">
    <property type="term" value="C:sulfite reductase complex (NADPH)"/>
    <property type="evidence" value="ECO:0007669"/>
    <property type="project" value="InterPro"/>
</dbReference>
<dbReference type="GO" id="GO:0051539">
    <property type="term" value="F:4 iron, 4 sulfur cluster binding"/>
    <property type="evidence" value="ECO:0007669"/>
    <property type="project" value="UniProtKB-KW"/>
</dbReference>
<dbReference type="GO" id="GO:0020037">
    <property type="term" value="F:heme binding"/>
    <property type="evidence" value="ECO:0007669"/>
    <property type="project" value="InterPro"/>
</dbReference>
<dbReference type="GO" id="GO:0046872">
    <property type="term" value="F:metal ion binding"/>
    <property type="evidence" value="ECO:0007669"/>
    <property type="project" value="UniProtKB-KW"/>
</dbReference>
<dbReference type="GO" id="GO:0050661">
    <property type="term" value="F:NADP binding"/>
    <property type="evidence" value="ECO:0007669"/>
    <property type="project" value="InterPro"/>
</dbReference>
<dbReference type="GO" id="GO:0050311">
    <property type="term" value="F:sulfite reductase (ferredoxin) activity"/>
    <property type="evidence" value="ECO:0007669"/>
    <property type="project" value="TreeGrafter"/>
</dbReference>
<dbReference type="GO" id="GO:0004783">
    <property type="term" value="F:sulfite reductase (NADPH) activity"/>
    <property type="evidence" value="ECO:0007669"/>
    <property type="project" value="UniProtKB-UniRule"/>
</dbReference>
<dbReference type="GO" id="GO:0019344">
    <property type="term" value="P:cysteine biosynthetic process"/>
    <property type="evidence" value="ECO:0007669"/>
    <property type="project" value="UniProtKB-KW"/>
</dbReference>
<dbReference type="GO" id="GO:0070814">
    <property type="term" value="P:hydrogen sulfide biosynthetic process"/>
    <property type="evidence" value="ECO:0007669"/>
    <property type="project" value="UniProtKB-UniRule"/>
</dbReference>
<dbReference type="GO" id="GO:0000103">
    <property type="term" value="P:sulfate assimilation"/>
    <property type="evidence" value="ECO:0007669"/>
    <property type="project" value="UniProtKB-UniRule"/>
</dbReference>
<dbReference type="FunFam" id="3.30.413.10:FF:000003">
    <property type="entry name" value="Sulfite reductase [NADPH] hemoprotein beta-component"/>
    <property type="match status" value="1"/>
</dbReference>
<dbReference type="FunFam" id="3.30.413.10:FF:000004">
    <property type="entry name" value="Sulfite reductase [NADPH] hemoprotein beta-component"/>
    <property type="match status" value="1"/>
</dbReference>
<dbReference type="Gene3D" id="3.30.413.10">
    <property type="entry name" value="Sulfite Reductase Hemoprotein, domain 1"/>
    <property type="match status" value="2"/>
</dbReference>
<dbReference type="HAMAP" id="MF_01540">
    <property type="entry name" value="CysI"/>
    <property type="match status" value="1"/>
</dbReference>
<dbReference type="InterPro" id="IPR011786">
    <property type="entry name" value="CysI"/>
</dbReference>
<dbReference type="InterPro" id="IPR005117">
    <property type="entry name" value="NiRdtase/SiRdtase_haem-b_fer"/>
</dbReference>
<dbReference type="InterPro" id="IPR036136">
    <property type="entry name" value="Nit/Sulf_reduc_fer-like_dom_sf"/>
</dbReference>
<dbReference type="InterPro" id="IPR006067">
    <property type="entry name" value="NO2/SO3_Rdtase_4Fe4S_dom"/>
</dbReference>
<dbReference type="InterPro" id="IPR045169">
    <property type="entry name" value="NO2/SO3_Rdtase_4Fe4S_prot"/>
</dbReference>
<dbReference type="InterPro" id="IPR045854">
    <property type="entry name" value="NO2/SO3_Rdtase_4Fe4S_sf"/>
</dbReference>
<dbReference type="InterPro" id="IPR006066">
    <property type="entry name" value="NO2/SO3_Rdtase_FeS/sirohaem_BS"/>
</dbReference>
<dbReference type="NCBIfam" id="TIGR02041">
    <property type="entry name" value="CysI"/>
    <property type="match status" value="1"/>
</dbReference>
<dbReference type="NCBIfam" id="NF010029">
    <property type="entry name" value="PRK13504.1"/>
    <property type="match status" value="1"/>
</dbReference>
<dbReference type="PANTHER" id="PTHR11493:SF47">
    <property type="entry name" value="SULFITE REDUCTASE [NADPH] SUBUNIT BETA"/>
    <property type="match status" value="1"/>
</dbReference>
<dbReference type="PANTHER" id="PTHR11493">
    <property type="entry name" value="SULFITE REDUCTASE [NADPH] SUBUNIT BETA-RELATED"/>
    <property type="match status" value="1"/>
</dbReference>
<dbReference type="Pfam" id="PF01077">
    <property type="entry name" value="NIR_SIR"/>
    <property type="match status" value="1"/>
</dbReference>
<dbReference type="Pfam" id="PF03460">
    <property type="entry name" value="NIR_SIR_ferr"/>
    <property type="match status" value="2"/>
</dbReference>
<dbReference type="PRINTS" id="PR00397">
    <property type="entry name" value="SIROHAEM"/>
</dbReference>
<dbReference type="SUPFAM" id="SSF56014">
    <property type="entry name" value="Nitrite and sulphite reductase 4Fe-4S domain-like"/>
    <property type="match status" value="2"/>
</dbReference>
<dbReference type="SUPFAM" id="SSF55124">
    <property type="entry name" value="Nitrite/Sulfite reductase N-terminal domain-like"/>
    <property type="match status" value="2"/>
</dbReference>
<dbReference type="PROSITE" id="PS00365">
    <property type="entry name" value="NIR_SIR"/>
    <property type="match status" value="1"/>
</dbReference>
<accession>Q0TEA3</accession>
<organism>
    <name type="scientific">Escherichia coli O6:K15:H31 (strain 536 / UPEC)</name>
    <dbReference type="NCBI Taxonomy" id="362663"/>
    <lineage>
        <taxon>Bacteria</taxon>
        <taxon>Pseudomonadati</taxon>
        <taxon>Pseudomonadota</taxon>
        <taxon>Gammaproteobacteria</taxon>
        <taxon>Enterobacterales</taxon>
        <taxon>Enterobacteriaceae</taxon>
        <taxon>Escherichia</taxon>
    </lineage>
</organism>
<sequence>MSEKHPGPLVVEGKLTDAERMKLESNYLRGTIAEDLNDGLTGGFKGDNFLLIRFHGMYQQDDRDIRAERAEQKLEPRHAMLLRCRLPGGVITTKQWQAIDKFAGENTIYGSIRLTNRQTFQFHGILKKNVKPVHQMLHSVGLDALATANDMNRNVLCTSNPYESQLHAEAYEWAKKISEHLLPRTRAYAEIWLDQEKVATTDEEPILGQTYLPRKFKTTVVIPPQNDIDLHANDMNFVAIAENGKLVGFNLLVGGGLSIEHGNKKTYARTASEFGYLPLEHTLAVAEAVVTTQRDWGNRTDRKNAKTKYTLERVGVETFKAEVERRAGIKFEPIRPYEFTGRGDRIGWVKGIDDNWHLTLFIENGRILDYPGRPLKTGLLEIAKIHKGDFRITANQNLIIAGVPESEKAKIEKIAKESGLMNAVTPQRENSMACVSFPTCPLAMAEAERFLPSFIDNIDNLMAKHGVSDEHIVMRVTGCPNGCGRAMLAEVGLVGKAPGRYNLHLGGNRIGTRIPRMYKENITEPEILASLDELIGRWAKEREVGEGFGDFTVRAGIIRPVLDPARDLWD</sequence>
<keyword id="KW-0004">4Fe-4S</keyword>
<keyword id="KW-0028">Amino-acid biosynthesis</keyword>
<keyword id="KW-0198">Cysteine biosynthesis</keyword>
<keyword id="KW-0349">Heme</keyword>
<keyword id="KW-0408">Iron</keyword>
<keyword id="KW-0411">Iron-sulfur</keyword>
<keyword id="KW-0479">Metal-binding</keyword>
<keyword id="KW-0521">NADP</keyword>
<keyword id="KW-0560">Oxidoreductase</keyword>
<protein>
    <recommendedName>
        <fullName evidence="1">Sulfite reductase [NADPH] hemoprotein beta-component</fullName>
        <shortName evidence="1">SiR-HP</shortName>
        <shortName evidence="1">SiRHP</shortName>
        <ecNumber evidence="1">1.8.1.2</ecNumber>
    </recommendedName>
</protein>
<reference key="1">
    <citation type="journal article" date="2006" name="Mol. Microbiol.">
        <title>Role of pathogenicity island-associated integrases in the genome plasticity of uropathogenic Escherichia coli strain 536.</title>
        <authorList>
            <person name="Hochhut B."/>
            <person name="Wilde C."/>
            <person name="Balling G."/>
            <person name="Middendorf B."/>
            <person name="Dobrindt U."/>
            <person name="Brzuszkiewicz E."/>
            <person name="Gottschalk G."/>
            <person name="Carniel E."/>
            <person name="Hacker J."/>
        </authorList>
    </citation>
    <scope>NUCLEOTIDE SEQUENCE [LARGE SCALE GENOMIC DNA]</scope>
    <source>
        <strain>536 / UPEC</strain>
    </source>
</reference>